<feature type="chain" id="PRO_1000144290" description="Large ribosomal subunit protein uL14">
    <location>
        <begin position="1"/>
        <end position="130"/>
    </location>
</feature>
<sequence>MIQQETILQVADNSGVKKVMCVKVLGGSKKRYATLGDEIIVAVKEAQPAYGLRDGQGKKVHNKAVQRAVVVRTKKEVRRPDGTYIRFDDNAVAIIDDKGNPKGTRIFGPVARELRDKKYMKIISLAPEVL</sequence>
<accession>B0SA37</accession>
<name>RL14_LEPBA</name>
<protein>
    <recommendedName>
        <fullName evidence="1">Large ribosomal subunit protein uL14</fullName>
    </recommendedName>
    <alternativeName>
        <fullName evidence="2">50S ribosomal protein L14</fullName>
    </alternativeName>
</protein>
<dbReference type="EMBL" id="CP000777">
    <property type="protein sequence ID" value="ABZ94407.1"/>
    <property type="molecule type" value="Genomic_DNA"/>
</dbReference>
<dbReference type="RefSeq" id="WP_002974152.1">
    <property type="nucleotide sequence ID" value="NC_010842.1"/>
</dbReference>
<dbReference type="SMR" id="B0SA37"/>
<dbReference type="GeneID" id="93343067"/>
<dbReference type="KEGG" id="lbf:LBF_1903"/>
<dbReference type="HOGENOM" id="CLU_095071_2_1_12"/>
<dbReference type="GO" id="GO:0022625">
    <property type="term" value="C:cytosolic large ribosomal subunit"/>
    <property type="evidence" value="ECO:0007669"/>
    <property type="project" value="TreeGrafter"/>
</dbReference>
<dbReference type="GO" id="GO:0070180">
    <property type="term" value="F:large ribosomal subunit rRNA binding"/>
    <property type="evidence" value="ECO:0007669"/>
    <property type="project" value="TreeGrafter"/>
</dbReference>
<dbReference type="GO" id="GO:0003735">
    <property type="term" value="F:structural constituent of ribosome"/>
    <property type="evidence" value="ECO:0007669"/>
    <property type="project" value="InterPro"/>
</dbReference>
<dbReference type="GO" id="GO:0006412">
    <property type="term" value="P:translation"/>
    <property type="evidence" value="ECO:0007669"/>
    <property type="project" value="UniProtKB-UniRule"/>
</dbReference>
<dbReference type="CDD" id="cd00337">
    <property type="entry name" value="Ribosomal_uL14"/>
    <property type="match status" value="1"/>
</dbReference>
<dbReference type="FunFam" id="2.40.150.20:FF:000001">
    <property type="entry name" value="50S ribosomal protein L14"/>
    <property type="match status" value="1"/>
</dbReference>
<dbReference type="Gene3D" id="2.40.150.20">
    <property type="entry name" value="Ribosomal protein L14"/>
    <property type="match status" value="1"/>
</dbReference>
<dbReference type="HAMAP" id="MF_01367">
    <property type="entry name" value="Ribosomal_uL14"/>
    <property type="match status" value="1"/>
</dbReference>
<dbReference type="InterPro" id="IPR000218">
    <property type="entry name" value="Ribosomal_uL14"/>
</dbReference>
<dbReference type="InterPro" id="IPR005745">
    <property type="entry name" value="Ribosomal_uL14_bac-type"/>
</dbReference>
<dbReference type="InterPro" id="IPR036853">
    <property type="entry name" value="Ribosomal_uL14_sf"/>
</dbReference>
<dbReference type="NCBIfam" id="TIGR01067">
    <property type="entry name" value="rplN_bact"/>
    <property type="match status" value="1"/>
</dbReference>
<dbReference type="PANTHER" id="PTHR11761">
    <property type="entry name" value="50S/60S RIBOSOMAL PROTEIN L14/L23"/>
    <property type="match status" value="1"/>
</dbReference>
<dbReference type="PANTHER" id="PTHR11761:SF3">
    <property type="entry name" value="LARGE RIBOSOMAL SUBUNIT PROTEIN UL14M"/>
    <property type="match status" value="1"/>
</dbReference>
<dbReference type="Pfam" id="PF00238">
    <property type="entry name" value="Ribosomal_L14"/>
    <property type="match status" value="1"/>
</dbReference>
<dbReference type="SMART" id="SM01374">
    <property type="entry name" value="Ribosomal_L14"/>
    <property type="match status" value="1"/>
</dbReference>
<dbReference type="SUPFAM" id="SSF50193">
    <property type="entry name" value="Ribosomal protein L14"/>
    <property type="match status" value="1"/>
</dbReference>
<evidence type="ECO:0000255" key="1">
    <source>
        <dbReference type="HAMAP-Rule" id="MF_01367"/>
    </source>
</evidence>
<evidence type="ECO:0000305" key="2"/>
<proteinExistence type="inferred from homology"/>
<organism>
    <name type="scientific">Leptospira biflexa serovar Patoc (strain Patoc 1 / Ames)</name>
    <dbReference type="NCBI Taxonomy" id="355278"/>
    <lineage>
        <taxon>Bacteria</taxon>
        <taxon>Pseudomonadati</taxon>
        <taxon>Spirochaetota</taxon>
        <taxon>Spirochaetia</taxon>
        <taxon>Leptospirales</taxon>
        <taxon>Leptospiraceae</taxon>
        <taxon>Leptospira</taxon>
    </lineage>
</organism>
<reference key="1">
    <citation type="journal article" date="2008" name="PLoS ONE">
        <title>Genome sequence of the saprophyte Leptospira biflexa provides insights into the evolution of Leptospira and the pathogenesis of leptospirosis.</title>
        <authorList>
            <person name="Picardeau M."/>
            <person name="Bulach D.M."/>
            <person name="Bouchier C."/>
            <person name="Zuerner R.L."/>
            <person name="Zidane N."/>
            <person name="Wilson P.J."/>
            <person name="Creno S."/>
            <person name="Kuczek E.S."/>
            <person name="Bommezzadri S."/>
            <person name="Davis J.C."/>
            <person name="McGrath A."/>
            <person name="Johnson M.J."/>
            <person name="Boursaux-Eude C."/>
            <person name="Seemann T."/>
            <person name="Rouy Z."/>
            <person name="Coppel R.L."/>
            <person name="Rood J.I."/>
            <person name="Lajus A."/>
            <person name="Davies J.K."/>
            <person name="Medigue C."/>
            <person name="Adler B."/>
        </authorList>
    </citation>
    <scope>NUCLEOTIDE SEQUENCE [LARGE SCALE GENOMIC DNA]</scope>
    <source>
        <strain>Patoc 1 / Ames</strain>
    </source>
</reference>
<keyword id="KW-0687">Ribonucleoprotein</keyword>
<keyword id="KW-0689">Ribosomal protein</keyword>
<keyword id="KW-0694">RNA-binding</keyword>
<keyword id="KW-0699">rRNA-binding</keyword>
<gene>
    <name evidence="1" type="primary">rplN</name>
    <name type="ordered locus">LBF_1903</name>
</gene>
<comment type="function">
    <text evidence="1">Binds to 23S rRNA. Forms part of two intersubunit bridges in the 70S ribosome.</text>
</comment>
<comment type="subunit">
    <text evidence="1">Part of the 50S ribosomal subunit. Forms a cluster with proteins L3 and L19. In the 70S ribosome, L14 and L19 interact and together make contacts with the 16S rRNA in bridges B5 and B8.</text>
</comment>
<comment type="similarity">
    <text evidence="1">Belongs to the universal ribosomal protein uL14 family.</text>
</comment>